<proteinExistence type="evidence at protein level"/>
<protein>
    <recommendedName>
        <fullName evidence="4">Archaeosine synthase subunit beta</fullName>
        <ecNumber evidence="6">4.3.2.-</ecNumber>
    </recommendedName>
    <alternativeName>
        <fullName evidence="4">Archaeosine synthase, q0kN-tRNA lyase subunit</fullName>
    </alternativeName>
    <alternativeName>
        <fullName evidence="4">Radical SAM enzyme for archaeosine formation</fullName>
        <shortName evidence="4">RaSEA</shortName>
    </alternativeName>
</protein>
<accession>Q5JE80</accession>
<reference key="1">
    <citation type="journal article" date="2005" name="Genome Res.">
        <title>Complete genome sequence of the hyperthermophilic archaeon Thermococcus kodakaraensis KOD1 and comparison with Pyrococcus genomes.</title>
        <authorList>
            <person name="Fukui T."/>
            <person name="Atomi H."/>
            <person name="Kanai T."/>
            <person name="Matsumi R."/>
            <person name="Fujiwara S."/>
            <person name="Imanaka T."/>
        </authorList>
    </citation>
    <scope>NUCLEOTIDE SEQUENCE [LARGE SCALE GENOMIC DNA]</scope>
    <source>
        <strain>ATCC BAA-918 / JCM 12380 / KOD1</strain>
    </source>
</reference>
<reference key="2">
    <citation type="journal article" date="2019" name="Nat. Chem. Biol.">
        <title>Identification of a radical SAM enzyme involved in the synthesis of archaeosine.</title>
        <authorList>
            <person name="Yokogawa T."/>
            <person name="Nomura Y."/>
            <person name="Yasuda A."/>
            <person name="Ogino H."/>
            <person name="Hiura K."/>
            <person name="Nakada S."/>
            <person name="Oka N."/>
            <person name="Ando K."/>
            <person name="Kawamura T."/>
            <person name="Hirata A."/>
            <person name="Hori H."/>
            <person name="Ohno S."/>
        </authorList>
    </citation>
    <scope>FUNCTION</scope>
    <scope>CATALYTIC ACTIVITY</scope>
    <scope>COFACTOR</scope>
    <scope>DISRUPTION PHENOTYPE</scope>
    <scope>PATHWAY</scope>
    <scope>INTERACTION WITH ARCS</scope>
    <scope>REACTION MECHANISM</scope>
    <source>
        <strain>ATCC BAA-918 / JCM 12380 / KOD1</strain>
    </source>
</reference>
<organism>
    <name type="scientific">Thermococcus kodakarensis (strain ATCC BAA-918 / JCM 12380 / KOD1)</name>
    <name type="common">Pyrococcus kodakaraensis (strain KOD1)</name>
    <dbReference type="NCBI Taxonomy" id="69014"/>
    <lineage>
        <taxon>Archaea</taxon>
        <taxon>Methanobacteriati</taxon>
        <taxon>Methanobacteriota</taxon>
        <taxon>Thermococci</taxon>
        <taxon>Thermococcales</taxon>
        <taxon>Thermococcaceae</taxon>
        <taxon>Thermococcus</taxon>
    </lineage>
</organism>
<comment type="function">
    <text evidence="3">Radical SAM enzyme involved in the synthesis of archaeosine, a modified nucleoside present in the dihydrouridine loop (D-loop) of archaeal tRNAs. Catalyzes the cleavage of the C(epsilon)-N bond of the lysine moiety of q0kN15-tRNA, leading to the formation of archaeosine at position 15 in tRNAs.</text>
</comment>
<comment type="catalytic activity">
    <reaction evidence="3">
        <text>7-N-[(5S)-5-amino-5-carboxypentyl]formamidino-7-deazaguanosine(15) in tRNA + S-adenosyl-L-methionine = archaeosine(15) in tRNA + L-1-piperideine-6-carboxylate + 5'-deoxyadenosine + L-methionine + 2 H(+)</text>
        <dbReference type="Rhea" id="RHEA:63220"/>
        <dbReference type="Rhea" id="RHEA-COMP:14170"/>
        <dbReference type="Rhea" id="RHEA-COMP:16288"/>
        <dbReference type="ChEBI" id="CHEBI:15378"/>
        <dbReference type="ChEBI" id="CHEBI:17319"/>
        <dbReference type="ChEBI" id="CHEBI:57844"/>
        <dbReference type="ChEBI" id="CHEBI:58769"/>
        <dbReference type="ChEBI" id="CHEBI:59789"/>
        <dbReference type="ChEBI" id="CHEBI:138803"/>
        <dbReference type="ChEBI" id="CHEBI:145542"/>
    </reaction>
    <physiologicalReaction direction="left-to-right" evidence="3">
        <dbReference type="Rhea" id="RHEA:63221"/>
    </physiologicalReaction>
</comment>
<comment type="cofactor">
    <cofactor evidence="6">
        <name>[4Fe-4S] cluster</name>
        <dbReference type="ChEBI" id="CHEBI:49883"/>
    </cofactor>
    <text evidence="6">Binds 1 [4Fe-4S] cluster. The cluster is coordinated with 3 cysteines and an exchangeable S-adenosyl-L-methionine.</text>
</comment>
<comment type="pathway">
    <text evidence="3">tRNA modification; archaeosine-tRNA biosynthesis.</text>
</comment>
<comment type="subunit">
    <text evidence="3">Forms a robust complex with the archaeosine synthase alpha subunit ArcS, likely an alpha(2)beta(2) heterotetrameric structure.</text>
</comment>
<comment type="disruption phenotype">
    <text evidence="3">Archaeosine is no more detected among the modified nucleosides in tRNA fractions, but a nucleoside corresponding to q0kN can be observed.</text>
</comment>
<comment type="similarity">
    <text evidence="5">Belongs to the radical SAM superfamily. RaSEA family.</text>
</comment>
<gene>
    <name evidence="7" type="ordered locus">TK1135</name>
</gene>
<dbReference type="EC" id="4.3.2.-" evidence="6"/>
<dbReference type="EMBL" id="AP006878">
    <property type="protein sequence ID" value="BAD85324.1"/>
    <property type="molecule type" value="Genomic_DNA"/>
</dbReference>
<dbReference type="RefSeq" id="WP_011250086.1">
    <property type="nucleotide sequence ID" value="NC_006624.1"/>
</dbReference>
<dbReference type="SMR" id="Q5JE80"/>
<dbReference type="STRING" id="69014.TK1135"/>
<dbReference type="EnsemblBacteria" id="BAD85324">
    <property type="protein sequence ID" value="BAD85324"/>
    <property type="gene ID" value="TK1135"/>
</dbReference>
<dbReference type="GeneID" id="78447649"/>
<dbReference type="KEGG" id="tko:TK1135"/>
<dbReference type="PATRIC" id="fig|69014.16.peg.1111"/>
<dbReference type="eggNOG" id="arCOG01360">
    <property type="taxonomic scope" value="Archaea"/>
</dbReference>
<dbReference type="HOGENOM" id="CLU_060488_0_0_2"/>
<dbReference type="InParanoid" id="Q5JE80"/>
<dbReference type="OrthoDB" id="105445at2157"/>
<dbReference type="PhylomeDB" id="Q5JE80"/>
<dbReference type="BRENDA" id="2.6.1.B20">
    <property type="organism ID" value="5246"/>
</dbReference>
<dbReference type="UniPathway" id="UPA00393"/>
<dbReference type="Proteomes" id="UP000000536">
    <property type="component" value="Chromosome"/>
</dbReference>
<dbReference type="GO" id="GO:0005737">
    <property type="term" value="C:cytoplasm"/>
    <property type="evidence" value="ECO:0000318"/>
    <property type="project" value="GO_Central"/>
</dbReference>
<dbReference type="GO" id="GO:0051539">
    <property type="term" value="F:4 iron, 4 sulfur cluster binding"/>
    <property type="evidence" value="ECO:0007669"/>
    <property type="project" value="UniProtKB-KW"/>
</dbReference>
<dbReference type="GO" id="GO:0016829">
    <property type="term" value="F:lyase activity"/>
    <property type="evidence" value="ECO:0007669"/>
    <property type="project" value="UniProtKB-KW"/>
</dbReference>
<dbReference type="GO" id="GO:0046872">
    <property type="term" value="F:metal ion binding"/>
    <property type="evidence" value="ECO:0007669"/>
    <property type="project" value="UniProtKB-KW"/>
</dbReference>
<dbReference type="GO" id="GO:0002926">
    <property type="term" value="P:tRNA wobble base 5-methoxycarbonylmethyl-2-thiouridinylation"/>
    <property type="evidence" value="ECO:0000318"/>
    <property type="project" value="GO_Central"/>
</dbReference>
<dbReference type="CDD" id="cd01335">
    <property type="entry name" value="Radical_SAM"/>
    <property type="match status" value="1"/>
</dbReference>
<dbReference type="InterPro" id="IPR039661">
    <property type="entry name" value="ELP3"/>
</dbReference>
<dbReference type="InterPro" id="IPR006638">
    <property type="entry name" value="Elp3/MiaA/NifB-like_rSAM"/>
</dbReference>
<dbReference type="InterPro" id="IPR005909">
    <property type="entry name" value="RaSEA"/>
</dbReference>
<dbReference type="InterPro" id="IPR007197">
    <property type="entry name" value="rSAM"/>
</dbReference>
<dbReference type="NCBIfam" id="TIGR01210">
    <property type="entry name" value="archaeosine biosynthesis radical SAM protein RaSEA"/>
    <property type="match status" value="1"/>
</dbReference>
<dbReference type="PANTHER" id="PTHR11135:SF0">
    <property type="entry name" value="ELONGATOR COMPLEX PROTEIN 3"/>
    <property type="match status" value="1"/>
</dbReference>
<dbReference type="PANTHER" id="PTHR11135">
    <property type="entry name" value="HISTONE ACETYLTRANSFERASE-RELATED"/>
    <property type="match status" value="1"/>
</dbReference>
<dbReference type="Pfam" id="PF04055">
    <property type="entry name" value="Radical_SAM"/>
    <property type="match status" value="1"/>
</dbReference>
<dbReference type="PIRSF" id="PIRSF004954">
    <property type="entry name" value="Radical_SAM"/>
    <property type="match status" value="1"/>
</dbReference>
<dbReference type="SFLD" id="SFLDS00029">
    <property type="entry name" value="Radical_SAM"/>
    <property type="match status" value="1"/>
</dbReference>
<dbReference type="SMART" id="SM00729">
    <property type="entry name" value="Elp3"/>
    <property type="match status" value="1"/>
</dbReference>
<dbReference type="SUPFAM" id="SSF102114">
    <property type="entry name" value="Radical SAM enzymes"/>
    <property type="match status" value="1"/>
</dbReference>
<dbReference type="PROSITE" id="PS51918">
    <property type="entry name" value="RADICAL_SAM"/>
    <property type="match status" value="1"/>
</dbReference>
<keyword id="KW-0004">4Fe-4S</keyword>
<keyword id="KW-0408">Iron</keyword>
<keyword id="KW-0411">Iron-sulfur</keyword>
<keyword id="KW-0456">Lyase</keyword>
<keyword id="KW-0479">Metal-binding</keyword>
<keyword id="KW-1185">Reference proteome</keyword>
<keyword id="KW-0949">S-adenosyl-L-methionine</keyword>
<keyword id="KW-0819">tRNA processing</keyword>
<sequence>MTYWTSEDNVAGKPGTALFIILPTIGCYRYRIGQACYMCSYPTAAPKVKWTQEAIVNYVKEALEKIEGTEGPFAVRMFTSGSFLDNGELKPETRRKIFEILAEMDNVEEIVIESRSELVRYEAVKELAEIVPDKHFEVAIGLETANDDVADVSINKGNTFADFVKAAEITHKAGAKVKTYLLLKPIFLSERDGVEDAKESIIKAEPYTDTFSINITDIQKGTLYERLWEKKEYRPPWLWSAVEVLIWAKRKFPNKRILSDPVGAGSKRGPHNCLTDYDRVIGKAIKKFSATQDLSYIENLKPECRDRWEYIVENGLLDWQLVTW</sequence>
<evidence type="ECO:0000250" key="1">
    <source>
        <dbReference type="UniProtKB" id="Q8THK1"/>
    </source>
</evidence>
<evidence type="ECO:0000255" key="2">
    <source>
        <dbReference type="PROSITE-ProRule" id="PRU01266"/>
    </source>
</evidence>
<evidence type="ECO:0000269" key="3">
    <source>
    </source>
</evidence>
<evidence type="ECO:0000303" key="4">
    <source>
    </source>
</evidence>
<evidence type="ECO:0000305" key="5"/>
<evidence type="ECO:0000305" key="6">
    <source>
    </source>
</evidence>
<evidence type="ECO:0000312" key="7">
    <source>
        <dbReference type="EMBL" id="BAD85324.1"/>
    </source>
</evidence>
<feature type="chain" id="PRO_0000450073" description="Archaeosine synthase subunit beta">
    <location>
        <begin position="1"/>
        <end position="324"/>
    </location>
</feature>
<feature type="domain" description="Radical SAM core" evidence="2">
    <location>
        <begin position="12"/>
        <end position="254"/>
    </location>
</feature>
<feature type="binding site" evidence="1">
    <location>
        <position position="27"/>
    </location>
    <ligand>
        <name>[4Fe-4S] cluster</name>
        <dbReference type="ChEBI" id="CHEBI:49883"/>
        <note>4Fe-4S-S-AdoMet</note>
    </ligand>
</feature>
<feature type="binding site" evidence="1">
    <location>
        <position position="36"/>
    </location>
    <ligand>
        <name>[4Fe-4S] cluster</name>
        <dbReference type="ChEBI" id="CHEBI:49883"/>
        <note>4Fe-4S-S-AdoMet</note>
    </ligand>
</feature>
<feature type="binding site" evidence="1">
    <location>
        <position position="39"/>
    </location>
    <ligand>
        <name>[4Fe-4S] cluster</name>
        <dbReference type="ChEBI" id="CHEBI:49883"/>
        <note>4Fe-4S-S-AdoMet</note>
    </ligand>
</feature>
<name>RASEA_THEKO</name>